<reference key="1">
    <citation type="journal article" date="2007" name="PLoS ONE">
        <title>A glimpse of streptococcal toxic shock syndrome from comparative genomics of S. suis 2 Chinese isolates.</title>
        <authorList>
            <person name="Chen C."/>
            <person name="Tang J."/>
            <person name="Dong W."/>
            <person name="Wang C."/>
            <person name="Feng Y."/>
            <person name="Wang J."/>
            <person name="Zheng F."/>
            <person name="Pan X."/>
            <person name="Liu D."/>
            <person name="Li M."/>
            <person name="Song Y."/>
            <person name="Zhu X."/>
            <person name="Sun H."/>
            <person name="Feng T."/>
            <person name="Guo Z."/>
            <person name="Ju A."/>
            <person name="Ge J."/>
            <person name="Dong Y."/>
            <person name="Sun W."/>
            <person name="Jiang Y."/>
            <person name="Wang J."/>
            <person name="Yan J."/>
            <person name="Yang H."/>
            <person name="Wang X."/>
            <person name="Gao G.F."/>
            <person name="Yang R."/>
            <person name="Wang J."/>
            <person name="Yu J."/>
        </authorList>
    </citation>
    <scope>NUCLEOTIDE SEQUENCE [LARGE SCALE GENOMIC DNA]</scope>
    <source>
        <strain>98HAH33</strain>
    </source>
</reference>
<feature type="chain" id="PRO_1000050150" description="Pyrrolidone-carboxylate peptidase">
    <location>
        <begin position="1"/>
        <end position="215"/>
    </location>
</feature>
<feature type="active site" evidence="1">
    <location>
        <position position="78"/>
    </location>
</feature>
<feature type="active site" evidence="1">
    <location>
        <position position="141"/>
    </location>
</feature>
<feature type="active site" evidence="1">
    <location>
        <position position="165"/>
    </location>
</feature>
<protein>
    <recommendedName>
        <fullName evidence="1">Pyrrolidone-carboxylate peptidase</fullName>
        <ecNumber evidence="1">3.4.19.3</ecNumber>
    </recommendedName>
    <alternativeName>
        <fullName evidence="1">5-oxoprolyl-peptidase</fullName>
    </alternativeName>
    <alternativeName>
        <fullName evidence="1">Pyroglutamyl-peptidase I</fullName>
        <shortName evidence="1">PGP-I</shortName>
        <shortName evidence="1">Pyrase</shortName>
    </alternativeName>
</protein>
<sequence length="215" mass="23281">MKIIVTGFDPFGGEPINPALETIKSLPKTIAGAEIILVEIPTVFDKAADVLEEKMAEHLPDAVLCIGQAGGRVDLTPERIAINQDDARIPDNEGQQPIDRTIREDGQPAYFSTLPIKAMVEAIHRIGLPASVSNTAGTFVCNHLMYQALYLAEKQFPKTKAGFLHIPFLPEQVVDKPGLASMSLNDIVRGVEVAIGAIVEYRDKEDIKKGGGSTH</sequence>
<proteinExistence type="inferred from homology"/>
<keyword id="KW-0963">Cytoplasm</keyword>
<keyword id="KW-0378">Hydrolase</keyword>
<keyword id="KW-0645">Protease</keyword>
<keyword id="KW-0788">Thiol protease</keyword>
<accession>A4W0R4</accession>
<gene>
    <name evidence="1" type="primary">pcp</name>
    <name type="ordered locus">SSU98_0795</name>
</gene>
<evidence type="ECO:0000255" key="1">
    <source>
        <dbReference type="HAMAP-Rule" id="MF_00417"/>
    </source>
</evidence>
<organism>
    <name type="scientific">Streptococcus suis (strain 98HAH33)</name>
    <dbReference type="NCBI Taxonomy" id="391296"/>
    <lineage>
        <taxon>Bacteria</taxon>
        <taxon>Bacillati</taxon>
        <taxon>Bacillota</taxon>
        <taxon>Bacilli</taxon>
        <taxon>Lactobacillales</taxon>
        <taxon>Streptococcaceae</taxon>
        <taxon>Streptococcus</taxon>
    </lineage>
</organism>
<dbReference type="EC" id="3.4.19.3" evidence="1"/>
<dbReference type="EMBL" id="CP000408">
    <property type="protein sequence ID" value="ABP91953.1"/>
    <property type="molecule type" value="Genomic_DNA"/>
</dbReference>
<dbReference type="SMR" id="A4W0R4"/>
<dbReference type="MEROPS" id="C15.001"/>
<dbReference type="KEGG" id="ssv:SSU98_0795"/>
<dbReference type="HOGENOM" id="CLU_043960_4_0_9"/>
<dbReference type="GO" id="GO:0005829">
    <property type="term" value="C:cytosol"/>
    <property type="evidence" value="ECO:0007669"/>
    <property type="project" value="InterPro"/>
</dbReference>
<dbReference type="GO" id="GO:0016920">
    <property type="term" value="F:pyroglutamyl-peptidase activity"/>
    <property type="evidence" value="ECO:0007669"/>
    <property type="project" value="UniProtKB-UniRule"/>
</dbReference>
<dbReference type="GO" id="GO:0006508">
    <property type="term" value="P:proteolysis"/>
    <property type="evidence" value="ECO:0007669"/>
    <property type="project" value="UniProtKB-KW"/>
</dbReference>
<dbReference type="CDD" id="cd00501">
    <property type="entry name" value="Peptidase_C15"/>
    <property type="match status" value="1"/>
</dbReference>
<dbReference type="FunFam" id="3.40.630.20:FF:000001">
    <property type="entry name" value="Pyrrolidone-carboxylate peptidase"/>
    <property type="match status" value="1"/>
</dbReference>
<dbReference type="Gene3D" id="3.40.630.20">
    <property type="entry name" value="Peptidase C15, pyroglutamyl peptidase I-like"/>
    <property type="match status" value="1"/>
</dbReference>
<dbReference type="HAMAP" id="MF_00417">
    <property type="entry name" value="Pyrrolid_peptidase"/>
    <property type="match status" value="1"/>
</dbReference>
<dbReference type="InterPro" id="IPR000816">
    <property type="entry name" value="Peptidase_C15"/>
</dbReference>
<dbReference type="InterPro" id="IPR016125">
    <property type="entry name" value="Peptidase_C15-like"/>
</dbReference>
<dbReference type="InterPro" id="IPR036440">
    <property type="entry name" value="Peptidase_C15-like_sf"/>
</dbReference>
<dbReference type="InterPro" id="IPR029762">
    <property type="entry name" value="PGP-I_bact-type"/>
</dbReference>
<dbReference type="InterPro" id="IPR033694">
    <property type="entry name" value="PGPEP1_Cys_AS"/>
</dbReference>
<dbReference type="InterPro" id="IPR033693">
    <property type="entry name" value="PGPEP1_Glu_AS"/>
</dbReference>
<dbReference type="NCBIfam" id="NF009676">
    <property type="entry name" value="PRK13197.1"/>
    <property type="match status" value="1"/>
</dbReference>
<dbReference type="NCBIfam" id="TIGR00504">
    <property type="entry name" value="pyro_pdase"/>
    <property type="match status" value="1"/>
</dbReference>
<dbReference type="PANTHER" id="PTHR23402">
    <property type="entry name" value="PROTEASE FAMILY C15 PYROGLUTAMYL-PEPTIDASE I-RELATED"/>
    <property type="match status" value="1"/>
</dbReference>
<dbReference type="PANTHER" id="PTHR23402:SF1">
    <property type="entry name" value="PYROGLUTAMYL-PEPTIDASE I"/>
    <property type="match status" value="1"/>
</dbReference>
<dbReference type="Pfam" id="PF01470">
    <property type="entry name" value="Peptidase_C15"/>
    <property type="match status" value="1"/>
</dbReference>
<dbReference type="PIRSF" id="PIRSF015592">
    <property type="entry name" value="Prld-crbxl_pptds"/>
    <property type="match status" value="1"/>
</dbReference>
<dbReference type="PRINTS" id="PR00706">
    <property type="entry name" value="PYROGLUPTASE"/>
</dbReference>
<dbReference type="SUPFAM" id="SSF53182">
    <property type="entry name" value="Pyrrolidone carboxyl peptidase (pyroglutamate aminopeptidase)"/>
    <property type="match status" value="1"/>
</dbReference>
<dbReference type="PROSITE" id="PS01334">
    <property type="entry name" value="PYRASE_CYS"/>
    <property type="match status" value="1"/>
</dbReference>
<dbReference type="PROSITE" id="PS01333">
    <property type="entry name" value="PYRASE_GLU"/>
    <property type="match status" value="1"/>
</dbReference>
<comment type="function">
    <text evidence="1">Removes 5-oxoproline from various penultimate amino acid residues except L-proline.</text>
</comment>
<comment type="catalytic activity">
    <reaction evidence="1">
        <text>Release of an N-terminal pyroglutamyl group from a polypeptide, the second amino acid generally not being Pro.</text>
        <dbReference type="EC" id="3.4.19.3"/>
    </reaction>
</comment>
<comment type="subunit">
    <text evidence="1">Homotetramer.</text>
</comment>
<comment type="subcellular location">
    <subcellularLocation>
        <location evidence="1">Cytoplasm</location>
    </subcellularLocation>
</comment>
<comment type="similarity">
    <text evidence="1">Belongs to the peptidase C15 family.</text>
</comment>
<name>PCP_STRS2</name>